<comment type="function">
    <text evidence="1">Involved in resistance toward heavy metals.</text>
</comment>
<comment type="cofactor">
    <cofactor evidence="1">
        <name>Cu cation</name>
        <dbReference type="ChEBI" id="CHEBI:23378"/>
    </cofactor>
    <text evidence="1">Binds 1 copper ion per subunit.</text>
</comment>
<comment type="subunit">
    <text evidence="1">Homotrimer.</text>
</comment>
<comment type="subcellular location">
    <subcellularLocation>
        <location evidence="1">Cytoplasm</location>
    </subcellularLocation>
</comment>
<comment type="similarity">
    <text evidence="1">Belongs to the CutA family.</text>
</comment>
<name>CUTA_ECOSE</name>
<accession>B6I609</accession>
<reference key="1">
    <citation type="journal article" date="2008" name="DNA Res.">
        <title>Complete genome sequence and comparative analysis of the wild-type commensal Escherichia coli strain SE11 isolated from a healthy adult.</title>
        <authorList>
            <person name="Oshima K."/>
            <person name="Toh H."/>
            <person name="Ogura Y."/>
            <person name="Sasamoto H."/>
            <person name="Morita H."/>
            <person name="Park S.-H."/>
            <person name="Ooka T."/>
            <person name="Iyoda S."/>
            <person name="Taylor T.D."/>
            <person name="Hayashi T."/>
            <person name="Itoh K."/>
            <person name="Hattori M."/>
        </authorList>
    </citation>
    <scope>NUCLEOTIDE SEQUENCE [LARGE SCALE GENOMIC DNA]</scope>
    <source>
        <strain>SE11</strain>
    </source>
</reference>
<sequence>MLDEKSSNTASVVVLCTAPDEATAQDLAAKVLAEKLAACATLIPGATSLYYWEGKLEQEYEVQMILKTTVSHQQALLECLKSHHPYQTPELLVLPVTHGDTDYLSWLNASLR</sequence>
<evidence type="ECO:0000255" key="1">
    <source>
        <dbReference type="HAMAP-Rule" id="MF_01160"/>
    </source>
</evidence>
<gene>
    <name evidence="1" type="primary">cutA</name>
    <name type="ordered locus">ECSE_4436</name>
</gene>
<organism>
    <name type="scientific">Escherichia coli (strain SE11)</name>
    <dbReference type="NCBI Taxonomy" id="409438"/>
    <lineage>
        <taxon>Bacteria</taxon>
        <taxon>Pseudomonadati</taxon>
        <taxon>Pseudomonadota</taxon>
        <taxon>Gammaproteobacteria</taxon>
        <taxon>Enterobacterales</taxon>
        <taxon>Enterobacteriaceae</taxon>
        <taxon>Escherichia</taxon>
    </lineage>
</organism>
<protein>
    <recommendedName>
        <fullName evidence="1">Divalent-cation tolerance protein CutA</fullName>
    </recommendedName>
</protein>
<dbReference type="EMBL" id="AP009240">
    <property type="protein sequence ID" value="BAG79960.1"/>
    <property type="molecule type" value="Genomic_DNA"/>
</dbReference>
<dbReference type="RefSeq" id="WP_000883400.1">
    <property type="nucleotide sequence ID" value="NC_011415.1"/>
</dbReference>
<dbReference type="SMR" id="B6I609"/>
<dbReference type="GeneID" id="93777687"/>
<dbReference type="KEGG" id="ecy:ECSE_4436"/>
<dbReference type="HOGENOM" id="CLU_098807_3_0_6"/>
<dbReference type="Proteomes" id="UP000008199">
    <property type="component" value="Chromosome"/>
</dbReference>
<dbReference type="GO" id="GO:0005737">
    <property type="term" value="C:cytoplasm"/>
    <property type="evidence" value="ECO:0007669"/>
    <property type="project" value="UniProtKB-SubCell"/>
</dbReference>
<dbReference type="GO" id="GO:0005507">
    <property type="term" value="F:copper ion binding"/>
    <property type="evidence" value="ECO:0007669"/>
    <property type="project" value="UniProtKB-UniRule"/>
</dbReference>
<dbReference type="GO" id="GO:0010038">
    <property type="term" value="P:response to metal ion"/>
    <property type="evidence" value="ECO:0007669"/>
    <property type="project" value="InterPro"/>
</dbReference>
<dbReference type="FunFam" id="3.30.70.120:FF:000004">
    <property type="entry name" value="Divalent-cation tolerance protein CutA"/>
    <property type="match status" value="1"/>
</dbReference>
<dbReference type="Gene3D" id="3.30.70.120">
    <property type="match status" value="1"/>
</dbReference>
<dbReference type="HAMAP" id="MF_01160">
    <property type="entry name" value="CutA"/>
    <property type="match status" value="1"/>
</dbReference>
<dbReference type="InterPro" id="IPR023700">
    <property type="entry name" value="CutA_Enterobact"/>
</dbReference>
<dbReference type="InterPro" id="IPR004323">
    <property type="entry name" value="Ion_tolerance_CutA"/>
</dbReference>
<dbReference type="InterPro" id="IPR011322">
    <property type="entry name" value="N-reg_PII-like_a/b"/>
</dbReference>
<dbReference type="InterPro" id="IPR015867">
    <property type="entry name" value="N-reg_PII/ATP_PRibTrfase_C"/>
</dbReference>
<dbReference type="NCBIfam" id="NF007930">
    <property type="entry name" value="PRK10645.1"/>
    <property type="match status" value="1"/>
</dbReference>
<dbReference type="PANTHER" id="PTHR23419">
    <property type="entry name" value="DIVALENT CATION TOLERANCE CUTA-RELATED"/>
    <property type="match status" value="1"/>
</dbReference>
<dbReference type="PANTHER" id="PTHR23419:SF8">
    <property type="entry name" value="FI09726P"/>
    <property type="match status" value="1"/>
</dbReference>
<dbReference type="Pfam" id="PF03091">
    <property type="entry name" value="CutA1"/>
    <property type="match status" value="1"/>
</dbReference>
<dbReference type="SUPFAM" id="SSF54913">
    <property type="entry name" value="GlnB-like"/>
    <property type="match status" value="1"/>
</dbReference>
<proteinExistence type="inferred from homology"/>
<feature type="chain" id="PRO_1000137845" description="Divalent-cation tolerance protein CutA">
    <location>
        <begin position="1"/>
        <end position="112"/>
    </location>
</feature>
<feature type="binding site" evidence="1">
    <location>
        <position position="16"/>
    </location>
    <ligand>
        <name>Cu cation</name>
        <dbReference type="ChEBI" id="CHEBI:23378"/>
    </ligand>
</feature>
<feature type="binding site" evidence="1">
    <location>
        <position position="83"/>
    </location>
    <ligand>
        <name>Cu cation</name>
        <dbReference type="ChEBI" id="CHEBI:23378"/>
    </ligand>
</feature>
<feature type="binding site" evidence="1">
    <location>
        <position position="84"/>
    </location>
    <ligand>
        <name>Cu cation</name>
        <dbReference type="ChEBI" id="CHEBI:23378"/>
    </ligand>
</feature>
<keyword id="KW-0186">Copper</keyword>
<keyword id="KW-0963">Cytoplasm</keyword>
<keyword id="KW-0479">Metal-binding</keyword>